<name>RL23A_CANAL</name>
<keyword id="KW-0002">3D-structure</keyword>
<keyword id="KW-0963">Cytoplasm</keyword>
<keyword id="KW-1185">Reference proteome</keyword>
<keyword id="KW-0687">Ribonucleoprotein</keyword>
<keyword id="KW-0689">Ribosomal protein</keyword>
<feature type="chain" id="PRO_0000456529" description="Large ribosomal subunit protein uL14">
    <location>
        <begin position="1"/>
        <end position="137"/>
    </location>
</feature>
<protein>
    <recommendedName>
        <fullName evidence="2">Large ribosomal subunit protein uL14</fullName>
    </recommendedName>
    <alternativeName>
        <fullName>60S ribosomal protein L23-A</fullName>
    </alternativeName>
</protein>
<reference key="1">
    <citation type="journal article" date="2004" name="Proc. Natl. Acad. Sci. U.S.A.">
        <title>The diploid genome sequence of Candida albicans.</title>
        <authorList>
            <person name="Jones T."/>
            <person name="Federspiel N.A."/>
            <person name="Chibana H."/>
            <person name="Dungan J."/>
            <person name="Kalman S."/>
            <person name="Magee B.B."/>
            <person name="Newport G."/>
            <person name="Thorstenson Y.R."/>
            <person name="Agabian N."/>
            <person name="Magee P.T."/>
            <person name="Davis R.W."/>
            <person name="Scherer S."/>
        </authorList>
    </citation>
    <scope>NUCLEOTIDE SEQUENCE [LARGE SCALE GENOMIC DNA]</scope>
    <source>
        <strain>SC5314 / ATCC MYA-2876</strain>
    </source>
</reference>
<reference key="2">
    <citation type="journal article" date="2007" name="Genome Biol.">
        <title>Assembly of the Candida albicans genome into sixteen supercontigs aligned on the eight chromosomes.</title>
        <authorList>
            <person name="van het Hoog M."/>
            <person name="Rast T.J."/>
            <person name="Martchenko M."/>
            <person name="Grindle S."/>
            <person name="Dignard D."/>
            <person name="Hogues H."/>
            <person name="Cuomo C."/>
            <person name="Berriman M."/>
            <person name="Scherer S."/>
            <person name="Magee B.B."/>
            <person name="Whiteway M."/>
            <person name="Chibana H."/>
            <person name="Nantel A."/>
            <person name="Magee P.T."/>
        </authorList>
    </citation>
    <scope>GENOME REANNOTATION</scope>
    <source>
        <strain>SC5314 / ATCC MYA-2876</strain>
    </source>
</reference>
<reference key="3">
    <citation type="journal article" date="2013" name="Genome Biol.">
        <title>Assembly of a phased diploid Candida albicans genome facilitates allele-specific measurements and provides a simple model for repeat and indel structure.</title>
        <authorList>
            <person name="Muzzey D."/>
            <person name="Schwartz K."/>
            <person name="Weissman J.S."/>
            <person name="Sherlock G."/>
        </authorList>
    </citation>
    <scope>NUCLEOTIDE SEQUENCE [LARGE SCALE GENOMIC DNA]</scope>
    <scope>GENOME REANNOTATION</scope>
    <source>
        <strain>SC5314 / ATCC MYA-2876</strain>
    </source>
</reference>
<reference evidence="5 6 7" key="4">
    <citation type="journal article" date="2022" name="Sci. Adv.">
        <title>E-site drug specificity of the human pathogen Candida albicans ribosome.</title>
        <authorList>
            <person name="Zgadzay Y."/>
            <person name="Kolosova O."/>
            <person name="Stetsenko A."/>
            <person name="Wu C."/>
            <person name="Bruchlen D."/>
            <person name="Usachev K."/>
            <person name="Validov S."/>
            <person name="Jenner L."/>
            <person name="Rogachev A."/>
            <person name="Yusupova G."/>
            <person name="Sachs M.S."/>
            <person name="Guskov A."/>
            <person name="Yusupov M."/>
        </authorList>
    </citation>
    <scope>STRUCTURE BY ELECTRON MICROSCOPY (2.32 ANGSTROMS) OF THE 80S RIBOSOME</scope>
    <scope>SUBUNIT</scope>
</reference>
<organism>
    <name type="scientific">Candida albicans (strain SC5314 / ATCC MYA-2876)</name>
    <name type="common">Yeast</name>
    <dbReference type="NCBI Taxonomy" id="237561"/>
    <lineage>
        <taxon>Eukaryota</taxon>
        <taxon>Fungi</taxon>
        <taxon>Dikarya</taxon>
        <taxon>Ascomycota</taxon>
        <taxon>Saccharomycotina</taxon>
        <taxon>Pichiomycetes</taxon>
        <taxon>Debaryomycetaceae</taxon>
        <taxon>Candida/Lodderomyces clade</taxon>
        <taxon>Candida</taxon>
    </lineage>
</organism>
<proteinExistence type="evidence at protein level"/>
<gene>
    <name evidence="2" type="primary">RPL23A</name>
    <name type="synonym">RPL23B</name>
    <name type="ordered locus">orf19.3504</name>
    <name type="ORF">CAALFM_C602070CA</name>
</gene>
<evidence type="ECO:0000269" key="1">
    <source>
    </source>
</evidence>
<evidence type="ECO:0000303" key="2">
    <source>
    </source>
</evidence>
<evidence type="ECO:0000305" key="3"/>
<evidence type="ECO:0000305" key="4">
    <source>
    </source>
</evidence>
<evidence type="ECO:0007744" key="5">
    <source>
        <dbReference type="PDB" id="7PZY"/>
    </source>
</evidence>
<evidence type="ECO:0007744" key="6">
    <source>
        <dbReference type="PDB" id="7Q0F"/>
    </source>
</evidence>
<evidence type="ECO:0007744" key="7">
    <source>
        <dbReference type="PDB" id="7Q0P"/>
    </source>
</evidence>
<dbReference type="EMBL" id="CP017628">
    <property type="protein sequence ID" value="AOW30143.1"/>
    <property type="molecule type" value="Genomic_DNA"/>
</dbReference>
<dbReference type="RefSeq" id="XP_019331007.1">
    <property type="nucleotide sequence ID" value="XM_019475462.1"/>
</dbReference>
<dbReference type="PDB" id="7PZY">
    <property type="method" value="EM"/>
    <property type="resolution" value="2.32 A"/>
    <property type="chains" value="6=1-137"/>
</dbReference>
<dbReference type="PDB" id="7Q08">
    <property type="method" value="EM"/>
    <property type="resolution" value="2.56 A"/>
    <property type="chains" value="6=1-137"/>
</dbReference>
<dbReference type="PDB" id="7Q0F">
    <property type="method" value="EM"/>
    <property type="resolution" value="2.64 A"/>
    <property type="chains" value="6=1-137"/>
</dbReference>
<dbReference type="PDB" id="7Q0P">
    <property type="method" value="EM"/>
    <property type="resolution" value="2.77 A"/>
    <property type="chains" value="6=1-137"/>
</dbReference>
<dbReference type="PDB" id="7Q0R">
    <property type="method" value="EM"/>
    <property type="resolution" value="2.67 A"/>
    <property type="chains" value="6=1-137"/>
</dbReference>
<dbReference type="PDB" id="8C3A">
    <property type="method" value="X-ray"/>
    <property type="resolution" value="3.00 A"/>
    <property type="chains" value="6/BQ=1-137"/>
</dbReference>
<dbReference type="PDB" id="8OGJ">
    <property type="method" value="EM"/>
    <property type="resolution" value="3.10 A"/>
    <property type="chains" value="6=1-137"/>
</dbReference>
<dbReference type="PDB" id="8OH6">
    <property type="method" value="X-ray"/>
    <property type="resolution" value="3.35 A"/>
    <property type="chains" value="6/BQ=1-137"/>
</dbReference>
<dbReference type="PDB" id="8OI5">
    <property type="method" value="X-ray"/>
    <property type="resolution" value="2.90 A"/>
    <property type="chains" value="6/BQ=1-137"/>
</dbReference>
<dbReference type="PDB" id="8OJ3">
    <property type="method" value="X-ray"/>
    <property type="resolution" value="3.50 A"/>
    <property type="chains" value="6/BQ=1-137"/>
</dbReference>
<dbReference type="PDBsum" id="7PZY"/>
<dbReference type="PDBsum" id="7Q08"/>
<dbReference type="PDBsum" id="7Q0F"/>
<dbReference type="PDBsum" id="7Q0P"/>
<dbReference type="PDBsum" id="7Q0R"/>
<dbReference type="PDBsum" id="8C3A"/>
<dbReference type="PDBsum" id="8OGJ"/>
<dbReference type="PDBsum" id="8OH6"/>
<dbReference type="PDBsum" id="8OI5"/>
<dbReference type="PDBsum" id="8OJ3"/>
<dbReference type="SMR" id="A0A1D8PPT5"/>
<dbReference type="FunCoup" id="A0A1D8PPT5">
    <property type="interactions" value="1156"/>
</dbReference>
<dbReference type="STRING" id="237561.A0A1D8PPT5"/>
<dbReference type="EnsemblFungi" id="C6_02070C_A-T">
    <property type="protein sequence ID" value="C6_02070C_A-T-p1"/>
    <property type="gene ID" value="C6_02070C_A"/>
</dbReference>
<dbReference type="GeneID" id="3647558"/>
<dbReference type="KEGG" id="cal:CAALFM_C602070CA"/>
<dbReference type="CGD" id="CAL0000187999">
    <property type="gene designation" value="RPL23A"/>
</dbReference>
<dbReference type="VEuPathDB" id="FungiDB:C6_02070C_A"/>
<dbReference type="eggNOG" id="KOG0901">
    <property type="taxonomic scope" value="Eukaryota"/>
</dbReference>
<dbReference type="InParanoid" id="A0A1D8PPT5"/>
<dbReference type="OrthoDB" id="407959at2759"/>
<dbReference type="Proteomes" id="UP000000559">
    <property type="component" value="Chromosome 6"/>
</dbReference>
<dbReference type="GO" id="GO:0022625">
    <property type="term" value="C:cytosolic large ribosomal subunit"/>
    <property type="evidence" value="ECO:0000318"/>
    <property type="project" value="GO_Central"/>
</dbReference>
<dbReference type="GO" id="GO:0030446">
    <property type="term" value="C:hyphal cell wall"/>
    <property type="evidence" value="ECO:0000314"/>
    <property type="project" value="CGD"/>
</dbReference>
<dbReference type="GO" id="GO:0070180">
    <property type="term" value="F:large ribosomal subunit rRNA binding"/>
    <property type="evidence" value="ECO:0000318"/>
    <property type="project" value="GO_Central"/>
</dbReference>
<dbReference type="GO" id="GO:0003735">
    <property type="term" value="F:structural constituent of ribosome"/>
    <property type="evidence" value="ECO:0000318"/>
    <property type="project" value="GO_Central"/>
</dbReference>
<dbReference type="GO" id="GO:0006412">
    <property type="term" value="P:translation"/>
    <property type="evidence" value="ECO:0007669"/>
    <property type="project" value="InterPro"/>
</dbReference>
<dbReference type="CDD" id="cd00337">
    <property type="entry name" value="Ribosomal_uL14"/>
    <property type="match status" value="1"/>
</dbReference>
<dbReference type="FunFam" id="2.40.150.20:FF:000003">
    <property type="entry name" value="60S ribosomal protein L23"/>
    <property type="match status" value="1"/>
</dbReference>
<dbReference type="Gene3D" id="2.40.150.20">
    <property type="entry name" value="Ribosomal protein L14"/>
    <property type="match status" value="1"/>
</dbReference>
<dbReference type="HAMAP" id="MF_01367">
    <property type="entry name" value="Ribosomal_uL14"/>
    <property type="match status" value="1"/>
</dbReference>
<dbReference type="InterPro" id="IPR000218">
    <property type="entry name" value="Ribosomal_uL14"/>
</dbReference>
<dbReference type="InterPro" id="IPR019972">
    <property type="entry name" value="Ribosomal_uL14_CS"/>
</dbReference>
<dbReference type="InterPro" id="IPR036853">
    <property type="entry name" value="Ribosomal_uL14_sf"/>
</dbReference>
<dbReference type="PANTHER" id="PTHR11761">
    <property type="entry name" value="50S/60S RIBOSOMAL PROTEIN L14/L23"/>
    <property type="match status" value="1"/>
</dbReference>
<dbReference type="PANTHER" id="PTHR11761:SF8">
    <property type="entry name" value="LARGE RIBOSOMAL SUBUNIT PROTEIN UL14"/>
    <property type="match status" value="1"/>
</dbReference>
<dbReference type="Pfam" id="PF00238">
    <property type="entry name" value="Ribosomal_L14"/>
    <property type="match status" value="1"/>
</dbReference>
<dbReference type="SMART" id="SM01374">
    <property type="entry name" value="Ribosomal_L14"/>
    <property type="match status" value="1"/>
</dbReference>
<dbReference type="SUPFAM" id="SSF50193">
    <property type="entry name" value="Ribosomal protein L14"/>
    <property type="match status" value="1"/>
</dbReference>
<dbReference type="PROSITE" id="PS00049">
    <property type="entry name" value="RIBOSOMAL_L14"/>
    <property type="match status" value="1"/>
</dbReference>
<sequence length="137" mass="14474">MSGSGASGNKFRMSLALPVGAVMNCADNSGARNLYVLAVKGTGARLNRLPAAAAGDMVMATVKKGKPELRKKVMPAIVIRQSKPWRRRDGVYLYFEDNAGVIVNPKGEMKGSAITGPVAKECADLWPRIASNSGVVV</sequence>
<accession>A0A1D8PPT5</accession>
<comment type="function">
    <text evidence="4">Component of the ribosome, a large ribonucleoprotein complex responsible for the synthesis of proteins in the cell. The small ribosomal subunit (SSU) binds messenger RNAs (mRNAs) and translates the encoded message by selecting cognate aminoacyl-transfer RNA (tRNA) molecules. The large subunit (LSU) contains the ribosomal catalytic site termed the peptidyl transferase center (PTC), which catalyzes the formation of peptide bonds, thereby polymerizing the amino acids delivered by tRNAs into a polypeptide chain. The nascent polypeptides leave the ribosome through a tunnel in the LSU and interact with protein factors that function in enzymatic processing, targeting, and the membrane insertion of nascent chains at the exit of the ribosomal tunnel.</text>
</comment>
<comment type="subunit">
    <text evidence="1">Component of the large ribosomal subunit (PubMed:35613268). Mature ribosomes consist of a small (40S) and a large (60S) subunit (PubMed:35613268). The 40S subunit contains about 32 different proteins and 1 molecule of RNA (18S) (PubMed:35613268). The 60S subunit contains 45 different proteins and 3 molecules of RNA (25S, 5.8S and 5S) (PubMed:35613268).</text>
</comment>
<comment type="subcellular location">
    <subcellularLocation>
        <location evidence="4">Cytoplasm</location>
    </subcellularLocation>
</comment>
<comment type="similarity">
    <text evidence="3">Belongs to the universal ribosomal protein uL14 family.</text>
</comment>